<feature type="chain" id="PRO_0000257390" description="tRNA (guanine-N(1)-)-methyltransferase">
    <location>
        <begin position="1"/>
        <end position="242"/>
    </location>
</feature>
<feature type="binding site" evidence="1">
    <location>
        <position position="111"/>
    </location>
    <ligand>
        <name>S-adenosyl-L-methionine</name>
        <dbReference type="ChEBI" id="CHEBI:59789"/>
    </ligand>
</feature>
<feature type="binding site" evidence="1">
    <location>
        <begin position="130"/>
        <end position="135"/>
    </location>
    <ligand>
        <name>S-adenosyl-L-methionine</name>
        <dbReference type="ChEBI" id="CHEBI:59789"/>
    </ligand>
</feature>
<name>TRMD_AYWBP</name>
<protein>
    <recommendedName>
        <fullName evidence="1">tRNA (guanine-N(1)-)-methyltransferase</fullName>
        <ecNumber evidence="1">2.1.1.228</ecNumber>
    </recommendedName>
    <alternativeName>
        <fullName evidence="1">M1G-methyltransferase</fullName>
    </alternativeName>
    <alternativeName>
        <fullName evidence="1">tRNA [GM37] methyltransferase</fullName>
    </alternativeName>
</protein>
<comment type="function">
    <text evidence="1">Specifically methylates guanosine-37 in various tRNAs.</text>
</comment>
<comment type="catalytic activity">
    <reaction evidence="1">
        <text>guanosine(37) in tRNA + S-adenosyl-L-methionine = N(1)-methylguanosine(37) in tRNA + S-adenosyl-L-homocysteine + H(+)</text>
        <dbReference type="Rhea" id="RHEA:36899"/>
        <dbReference type="Rhea" id="RHEA-COMP:10145"/>
        <dbReference type="Rhea" id="RHEA-COMP:10147"/>
        <dbReference type="ChEBI" id="CHEBI:15378"/>
        <dbReference type="ChEBI" id="CHEBI:57856"/>
        <dbReference type="ChEBI" id="CHEBI:59789"/>
        <dbReference type="ChEBI" id="CHEBI:73542"/>
        <dbReference type="ChEBI" id="CHEBI:74269"/>
        <dbReference type="EC" id="2.1.1.228"/>
    </reaction>
</comment>
<comment type="subunit">
    <text evidence="1">Homodimer.</text>
</comment>
<comment type="subcellular location">
    <subcellularLocation>
        <location evidence="1">Cytoplasm</location>
    </subcellularLocation>
</comment>
<comment type="similarity">
    <text evidence="1">Belongs to the RNA methyltransferase TrmD family.</text>
</comment>
<dbReference type="EC" id="2.1.1.228" evidence="1"/>
<dbReference type="EMBL" id="CP000061">
    <property type="protein sequence ID" value="ABC65424.1"/>
    <property type="molecule type" value="Genomic_DNA"/>
</dbReference>
<dbReference type="RefSeq" id="WP_011412588.1">
    <property type="nucleotide sequence ID" value="NC_007716.1"/>
</dbReference>
<dbReference type="SMR" id="Q2NJG9"/>
<dbReference type="STRING" id="322098.AYWB_307"/>
<dbReference type="KEGG" id="ayw:AYWB_307"/>
<dbReference type="eggNOG" id="COG0336">
    <property type="taxonomic scope" value="Bacteria"/>
</dbReference>
<dbReference type="HOGENOM" id="CLU_047363_0_1_14"/>
<dbReference type="OrthoDB" id="9807416at2"/>
<dbReference type="PhylomeDB" id="Q2NJG9"/>
<dbReference type="Proteomes" id="UP000001934">
    <property type="component" value="Chromosome"/>
</dbReference>
<dbReference type="GO" id="GO:0005829">
    <property type="term" value="C:cytosol"/>
    <property type="evidence" value="ECO:0007669"/>
    <property type="project" value="TreeGrafter"/>
</dbReference>
<dbReference type="GO" id="GO:0052906">
    <property type="term" value="F:tRNA (guanine(37)-N1)-methyltransferase activity"/>
    <property type="evidence" value="ECO:0007669"/>
    <property type="project" value="UniProtKB-UniRule"/>
</dbReference>
<dbReference type="GO" id="GO:0002939">
    <property type="term" value="P:tRNA N1-guanine methylation"/>
    <property type="evidence" value="ECO:0007669"/>
    <property type="project" value="TreeGrafter"/>
</dbReference>
<dbReference type="CDD" id="cd18080">
    <property type="entry name" value="TrmD-like"/>
    <property type="match status" value="1"/>
</dbReference>
<dbReference type="FunFam" id="1.10.1270.20:FF:000001">
    <property type="entry name" value="tRNA (guanine-N(1)-)-methyltransferase"/>
    <property type="match status" value="1"/>
</dbReference>
<dbReference type="FunFam" id="3.40.1280.10:FF:000001">
    <property type="entry name" value="tRNA (guanine-N(1)-)-methyltransferase"/>
    <property type="match status" value="1"/>
</dbReference>
<dbReference type="Gene3D" id="3.40.1280.10">
    <property type="match status" value="1"/>
</dbReference>
<dbReference type="Gene3D" id="1.10.1270.20">
    <property type="entry name" value="tRNA(m1g37)methyltransferase, domain 2"/>
    <property type="match status" value="1"/>
</dbReference>
<dbReference type="HAMAP" id="MF_00605">
    <property type="entry name" value="TrmD"/>
    <property type="match status" value="1"/>
</dbReference>
<dbReference type="InterPro" id="IPR029028">
    <property type="entry name" value="Alpha/beta_knot_MTases"/>
</dbReference>
<dbReference type="InterPro" id="IPR023148">
    <property type="entry name" value="tRNA_m1G_MeTrfase_C_sf"/>
</dbReference>
<dbReference type="InterPro" id="IPR002649">
    <property type="entry name" value="tRNA_m1G_MeTrfase_TrmD"/>
</dbReference>
<dbReference type="InterPro" id="IPR029026">
    <property type="entry name" value="tRNA_m1G_MTases_N"/>
</dbReference>
<dbReference type="InterPro" id="IPR016009">
    <property type="entry name" value="tRNA_MeTrfase_TRMD/TRM10"/>
</dbReference>
<dbReference type="NCBIfam" id="NF000648">
    <property type="entry name" value="PRK00026.1"/>
    <property type="match status" value="1"/>
</dbReference>
<dbReference type="NCBIfam" id="TIGR00088">
    <property type="entry name" value="trmD"/>
    <property type="match status" value="1"/>
</dbReference>
<dbReference type="PANTHER" id="PTHR46417">
    <property type="entry name" value="TRNA (GUANINE-N(1)-)-METHYLTRANSFERASE"/>
    <property type="match status" value="1"/>
</dbReference>
<dbReference type="PANTHER" id="PTHR46417:SF1">
    <property type="entry name" value="TRNA (GUANINE-N(1)-)-METHYLTRANSFERASE"/>
    <property type="match status" value="1"/>
</dbReference>
<dbReference type="Pfam" id="PF01746">
    <property type="entry name" value="tRNA_m1G_MT"/>
    <property type="match status" value="1"/>
</dbReference>
<dbReference type="PIRSF" id="PIRSF000386">
    <property type="entry name" value="tRNA_mtase"/>
    <property type="match status" value="1"/>
</dbReference>
<dbReference type="SUPFAM" id="SSF75217">
    <property type="entry name" value="alpha/beta knot"/>
    <property type="match status" value="1"/>
</dbReference>
<keyword id="KW-0963">Cytoplasm</keyword>
<keyword id="KW-0489">Methyltransferase</keyword>
<keyword id="KW-0949">S-adenosyl-L-methionine</keyword>
<keyword id="KW-0808">Transferase</keyword>
<keyword id="KW-0819">tRNA processing</keyword>
<sequence>MIIEIITIFPSFFKSFCETSIIKRALEQKKVQIKIHDLRIYSSNKHNQVDDSVYGGGVGMLLSFPPFFDCLQKIKTPQSKVILLSPQGQIFNQIHATNFAQKETHLIILCGNYEGVDARILQYIDAEISIGDYVLTGGEIAATVLVDAITRLIPGVIKEQSYLEDSHQQGLLKYPQYTRPQNYFNHVVPTILLSGNHAKIRSWRQKESLKKTLQKRPDLLENKKLTLEQTKLLKEIKQELQK</sequence>
<evidence type="ECO:0000255" key="1">
    <source>
        <dbReference type="HAMAP-Rule" id="MF_00605"/>
    </source>
</evidence>
<gene>
    <name evidence="1" type="primary">trmD</name>
    <name type="ordered locus">AYWB_307</name>
</gene>
<reference key="1">
    <citation type="journal article" date="2006" name="J. Bacteriol.">
        <title>Living with genome instability: the adaptation of phytoplasmas to diverse environments of their insect and plant hosts.</title>
        <authorList>
            <person name="Bai X."/>
            <person name="Zhang J."/>
            <person name="Ewing A."/>
            <person name="Miller S.A."/>
            <person name="Jancso Radek A."/>
            <person name="Shevchenko D.V."/>
            <person name="Tsukerman K."/>
            <person name="Walunas T."/>
            <person name="Lapidus A."/>
            <person name="Campbell J.W."/>
            <person name="Hogenhout S.A."/>
        </authorList>
    </citation>
    <scope>NUCLEOTIDE SEQUENCE [LARGE SCALE GENOMIC DNA]</scope>
    <source>
        <strain>AYWB</strain>
    </source>
</reference>
<accession>Q2NJG9</accession>
<organism>
    <name type="scientific">Aster yellows witches'-broom phytoplasma (strain AYWB)</name>
    <dbReference type="NCBI Taxonomy" id="322098"/>
    <lineage>
        <taxon>Bacteria</taxon>
        <taxon>Bacillati</taxon>
        <taxon>Mycoplasmatota</taxon>
        <taxon>Mollicutes</taxon>
        <taxon>Acholeplasmatales</taxon>
        <taxon>Acholeplasmataceae</taxon>
        <taxon>Candidatus Phytoplasma</taxon>
        <taxon>16SrI (Aster yellows group)</taxon>
    </lineage>
</organism>
<proteinExistence type="inferred from homology"/>